<protein>
    <recommendedName>
        <fullName>DNA-directed RNA polymerase III subunit RPC9</fullName>
        <shortName>RNA polymerase III subunit C9</shortName>
    </recommendedName>
</protein>
<evidence type="ECO:0000250" key="1">
    <source>
        <dbReference type="UniProtKB" id="O35427"/>
    </source>
</evidence>
<evidence type="ECO:0000250" key="2">
    <source>
        <dbReference type="UniProtKB" id="O75575"/>
    </source>
</evidence>
<evidence type="ECO:0000250" key="3">
    <source>
        <dbReference type="UniProtKB" id="Q9C0Z9"/>
    </source>
</evidence>
<evidence type="ECO:0000256" key="4">
    <source>
        <dbReference type="SAM" id="MobiDB-lite"/>
    </source>
</evidence>
<evidence type="ECO:0000305" key="5"/>
<sequence length="148" mass="16745">MEVKDANAALLSNYEVFQLLTDLKEQRKESGKNKHSSGQQNLNTITYETLKYISKTPCKHQSPEIVREFLTAMKSHKLTKAEKLQLLNHRPVTAVEIQLMVEESEERLTEEQIEALLHTVTSILPAGPEAEQQQNASDDVAMDEEDPA</sequence>
<reference key="1">
    <citation type="submission" date="2006-10" db="EMBL/GenBank/DDBJ databases">
        <authorList>
            <consortium name="NIH - Mammalian Gene Collection (MGC) project"/>
        </authorList>
    </citation>
    <scope>NUCLEOTIDE SEQUENCE [LARGE SCALE MRNA]</scope>
    <source>
        <strain>Hereford</strain>
        <tissue>Fetal pons</tissue>
    </source>
</reference>
<name>RPC9_BOVIN</name>
<gene>
    <name type="primary">CRCP</name>
</gene>
<comment type="function">
    <text evidence="2 3">DNA-dependent RNA polymerase catalyzes the transcription of DNA into RNA using the four ribonucleoside triphosphates as substrates. Specific peripheric component of RNA polymerase III (Pol III) which synthesizes small non-coding RNAs including 5S rRNA, snRNAs, tRNAs and miRNAs from at least 500 distinct genomic loci (By similarity). With POLR3H/RPC8 forms a mobile stalk that protrudes from Pol III core and functions primarily in transcription initiation (By similarity). Pol III plays a key role in sensing and limiting infection by intracellular bacteria and DNA viruses. Acts as nuclear and cytosolic DNA sensor involved in innate immune response. Can sense non-self dsDNA that serves as template for transcription into dsRNA. The non-self RNA polymerase III transcripts, such as Epstein-Barr virus-encoded RNAs (EBERs) induce type I interferon and NF-kappa-B through the RIG-I pathway (By similarity).</text>
</comment>
<comment type="function">
    <text evidence="2">Accessory protein for the calcitonin gene-related peptide (CGRP) receptor. It modulates CGRP responsiveness in a variety of tissues.</text>
</comment>
<comment type="subunit">
    <text evidence="2">Component of the RNA polymerase III complex consisting of 17 subunits: a ten-subunit horseshoe-shaped catalytic core composed of POLR3A/RPC1, POLR3B/RPC2, POLR1C/RPAC1, POLR1D/RPAC2, POLR3K/RPC10, POLR2E/RPABC1, POLR2F/RPABC2, POLR2H/RPABC3, POLR2K/RPABC4 and POLR2L/RPABC5; a mobile stalk composed of two subunits POLR3H/RPC8 and CRCP/RPC9, protruding from the core and functioning primarily in transcription initiation; and additional subunits homologous to general transcription factors of the RNA polymerase II machinery, POLR3C/RPC3-POLR3F/RPC6-POLR3G/RPC7 heterotrimer required for transcription initiation and POLR3D/RPC4-POLR3E/RPC5 heterodimer involved in both transcription initiation and termination.</text>
</comment>
<comment type="subcellular location">
    <subcellularLocation>
        <location evidence="2">Nucleus</location>
    </subcellularLocation>
    <subcellularLocation>
        <location evidence="1">Cell membrane</location>
        <topology evidence="1">Peripheral membrane protein</topology>
        <orientation evidence="1">Cytoplasmic side</orientation>
    </subcellularLocation>
</comment>
<comment type="similarity">
    <text evidence="5">Belongs to the eukaryotic RPC9 RNA polymerase subunit family.</text>
</comment>
<organism>
    <name type="scientific">Bos taurus</name>
    <name type="common">Bovine</name>
    <dbReference type="NCBI Taxonomy" id="9913"/>
    <lineage>
        <taxon>Eukaryota</taxon>
        <taxon>Metazoa</taxon>
        <taxon>Chordata</taxon>
        <taxon>Craniata</taxon>
        <taxon>Vertebrata</taxon>
        <taxon>Euteleostomi</taxon>
        <taxon>Mammalia</taxon>
        <taxon>Eutheria</taxon>
        <taxon>Laurasiatheria</taxon>
        <taxon>Artiodactyla</taxon>
        <taxon>Ruminantia</taxon>
        <taxon>Pecora</taxon>
        <taxon>Bovidae</taxon>
        <taxon>Bovinae</taxon>
        <taxon>Bos</taxon>
    </lineage>
</organism>
<feature type="chain" id="PRO_0000328050" description="DNA-directed RNA polymerase III subunit RPC9">
    <location>
        <begin position="1"/>
        <end position="148"/>
    </location>
</feature>
<feature type="region of interest" description="Disordered" evidence="4">
    <location>
        <begin position="125"/>
        <end position="148"/>
    </location>
</feature>
<dbReference type="EMBL" id="BC126530">
    <property type="protein sequence ID" value="AAI26531.1"/>
    <property type="molecule type" value="mRNA"/>
</dbReference>
<dbReference type="RefSeq" id="NP_001071338.1">
    <property type="nucleotide sequence ID" value="NM_001077870.1"/>
</dbReference>
<dbReference type="SMR" id="A0JN61"/>
<dbReference type="FunCoup" id="A0JN61">
    <property type="interactions" value="1768"/>
</dbReference>
<dbReference type="STRING" id="9913.ENSBTAP00000048749"/>
<dbReference type="PaxDb" id="9913-ENSBTAP00000048749"/>
<dbReference type="GeneID" id="507533"/>
<dbReference type="KEGG" id="bta:507533"/>
<dbReference type="CTD" id="27297"/>
<dbReference type="VEuPathDB" id="HostDB:ENSBTAG00000037489"/>
<dbReference type="eggNOG" id="KOG4168">
    <property type="taxonomic scope" value="Eukaryota"/>
</dbReference>
<dbReference type="HOGENOM" id="CLU_092529_5_0_1"/>
<dbReference type="InParanoid" id="A0JN61"/>
<dbReference type="OMA" id="VMIINLR"/>
<dbReference type="TreeFam" id="TF323294"/>
<dbReference type="Reactome" id="R-BTA-76061">
    <property type="pathway name" value="RNA Polymerase III Transcription Initiation From Type 1 Promoter"/>
</dbReference>
<dbReference type="Reactome" id="R-BTA-76066">
    <property type="pathway name" value="RNA Polymerase III Transcription Initiation From Type 2 Promoter"/>
</dbReference>
<dbReference type="Reactome" id="R-BTA-76071">
    <property type="pathway name" value="RNA Polymerase III Transcription Initiation From Type 3 Promoter"/>
</dbReference>
<dbReference type="Proteomes" id="UP000009136">
    <property type="component" value="Chromosome 25"/>
</dbReference>
<dbReference type="Bgee" id="ENSBTAG00000037489">
    <property type="expression patterns" value="Expressed in oocyte and 103 other cell types or tissues"/>
</dbReference>
<dbReference type="GO" id="GO:0009360">
    <property type="term" value="C:DNA polymerase III complex"/>
    <property type="evidence" value="ECO:0000250"/>
    <property type="project" value="UniProtKB"/>
</dbReference>
<dbReference type="GO" id="GO:0005886">
    <property type="term" value="C:plasma membrane"/>
    <property type="evidence" value="ECO:0007669"/>
    <property type="project" value="UniProtKB-SubCell"/>
</dbReference>
<dbReference type="GO" id="GO:0005666">
    <property type="term" value="C:RNA polymerase III complex"/>
    <property type="evidence" value="ECO:0000318"/>
    <property type="project" value="GO_Central"/>
</dbReference>
<dbReference type="GO" id="GO:0003899">
    <property type="term" value="F:DNA-directed RNA polymerase activity"/>
    <property type="evidence" value="ECO:0000250"/>
    <property type="project" value="UniProtKB"/>
</dbReference>
<dbReference type="GO" id="GO:0000166">
    <property type="term" value="F:nucleotide binding"/>
    <property type="evidence" value="ECO:0007669"/>
    <property type="project" value="InterPro"/>
</dbReference>
<dbReference type="GO" id="GO:0051607">
    <property type="term" value="P:defense response to virus"/>
    <property type="evidence" value="ECO:0007669"/>
    <property type="project" value="UniProtKB-KW"/>
</dbReference>
<dbReference type="GO" id="GO:0045087">
    <property type="term" value="P:innate immune response"/>
    <property type="evidence" value="ECO:0007669"/>
    <property type="project" value="UniProtKB-KW"/>
</dbReference>
<dbReference type="GO" id="GO:0006383">
    <property type="term" value="P:transcription by RNA polymerase III"/>
    <property type="evidence" value="ECO:0000250"/>
    <property type="project" value="UniProtKB"/>
</dbReference>
<dbReference type="GO" id="GO:0006384">
    <property type="term" value="P:transcription initiation at RNA polymerase III promoter"/>
    <property type="evidence" value="ECO:0000318"/>
    <property type="project" value="GO_Central"/>
</dbReference>
<dbReference type="FunFam" id="1.20.1250.40:FF:000002">
    <property type="entry name" value="DNA-directed RNA polymerase III subunit RPC9"/>
    <property type="match status" value="1"/>
</dbReference>
<dbReference type="Gene3D" id="1.20.1250.40">
    <property type="match status" value="1"/>
</dbReference>
<dbReference type="InterPro" id="IPR010997">
    <property type="entry name" value="HRDC-like_sf"/>
</dbReference>
<dbReference type="InterPro" id="IPR006590">
    <property type="entry name" value="RNA_pol_Rpb4/RPC9_core"/>
</dbReference>
<dbReference type="InterPro" id="IPR005574">
    <property type="entry name" value="Rpb4/RPC9"/>
</dbReference>
<dbReference type="InterPro" id="IPR038324">
    <property type="entry name" value="Rpb4/RPC9_sf"/>
</dbReference>
<dbReference type="InterPro" id="IPR038846">
    <property type="entry name" value="RPC9"/>
</dbReference>
<dbReference type="PANTHER" id="PTHR15561">
    <property type="entry name" value="CALCITONIN GENE-RELATED PEPTIDE-RECEPTOR COMPONENT PROTEIN"/>
    <property type="match status" value="1"/>
</dbReference>
<dbReference type="PANTHER" id="PTHR15561:SF0">
    <property type="entry name" value="DNA-DIRECTED RNA POLYMERASE III SUBUNIT RPC9"/>
    <property type="match status" value="1"/>
</dbReference>
<dbReference type="Pfam" id="PF03874">
    <property type="entry name" value="RNA_pol_Rpb4"/>
    <property type="match status" value="1"/>
</dbReference>
<dbReference type="SMART" id="SM00657">
    <property type="entry name" value="RPOL4c"/>
    <property type="match status" value="1"/>
</dbReference>
<dbReference type="SUPFAM" id="SSF47819">
    <property type="entry name" value="HRDC-like"/>
    <property type="match status" value="1"/>
</dbReference>
<accession>A0JN61</accession>
<proteinExistence type="evidence at transcript level"/>
<keyword id="KW-0051">Antiviral defense</keyword>
<keyword id="KW-1003">Cell membrane</keyword>
<keyword id="KW-0240">DNA-directed RNA polymerase</keyword>
<keyword id="KW-0391">Immunity</keyword>
<keyword id="KW-0399">Innate immunity</keyword>
<keyword id="KW-0472">Membrane</keyword>
<keyword id="KW-0539">Nucleus</keyword>
<keyword id="KW-1185">Reference proteome</keyword>
<keyword id="KW-0804">Transcription</keyword>